<protein>
    <recommendedName>
        <fullName evidence="1">Eukaryotic translation initiation factor 3 subunit K</fullName>
        <shortName evidence="1">eIF3k</shortName>
    </recommendedName>
    <alternativeName>
        <fullName evidence="1">eIF-3 p25</fullName>
    </alternativeName>
</protein>
<feature type="chain" id="PRO_0000366908" description="Eukaryotic translation initiation factor 3 subunit K">
    <location>
        <begin position="1"/>
        <end position="245"/>
    </location>
</feature>
<feature type="domain" description="PCI" evidence="2">
    <location>
        <begin position="46"/>
        <end position="227"/>
    </location>
</feature>
<dbReference type="EMBL" id="CP009806">
    <property type="protein sequence ID" value="ATZ47361.1"/>
    <property type="molecule type" value="Genomic_DNA"/>
</dbReference>
<dbReference type="RefSeq" id="XP_001550590.1">
    <property type="nucleotide sequence ID" value="XM_001550540.1"/>
</dbReference>
<dbReference type="SMR" id="A6SDU6"/>
<dbReference type="EnsemblFungi" id="Bcin02g06500.1">
    <property type="protein sequence ID" value="Bcin02p06500.1"/>
    <property type="gene ID" value="Bcin02g06500"/>
</dbReference>
<dbReference type="GeneID" id="5431086"/>
<dbReference type="KEGG" id="bfu:BCIN_02g06500"/>
<dbReference type="VEuPathDB" id="FungiDB:Bcin02g06500"/>
<dbReference type="OMA" id="GDDLCAD"/>
<dbReference type="OrthoDB" id="337745at2759"/>
<dbReference type="Proteomes" id="UP000001798">
    <property type="component" value="Chromosome bcin02"/>
</dbReference>
<dbReference type="GO" id="GO:0016282">
    <property type="term" value="C:eukaryotic 43S preinitiation complex"/>
    <property type="evidence" value="ECO:0007669"/>
    <property type="project" value="UniProtKB-UniRule"/>
</dbReference>
<dbReference type="GO" id="GO:0033290">
    <property type="term" value="C:eukaryotic 48S preinitiation complex"/>
    <property type="evidence" value="ECO:0007669"/>
    <property type="project" value="UniProtKB-UniRule"/>
</dbReference>
<dbReference type="GO" id="GO:0005852">
    <property type="term" value="C:eukaryotic translation initiation factor 3 complex"/>
    <property type="evidence" value="ECO:0007669"/>
    <property type="project" value="UniProtKB-UniRule"/>
</dbReference>
<dbReference type="GO" id="GO:0043022">
    <property type="term" value="F:ribosome binding"/>
    <property type="evidence" value="ECO:0007669"/>
    <property type="project" value="InterPro"/>
</dbReference>
<dbReference type="GO" id="GO:0003723">
    <property type="term" value="F:RNA binding"/>
    <property type="evidence" value="ECO:0007669"/>
    <property type="project" value="UniProtKB-UniRule"/>
</dbReference>
<dbReference type="GO" id="GO:0003743">
    <property type="term" value="F:translation initiation factor activity"/>
    <property type="evidence" value="ECO:0007669"/>
    <property type="project" value="UniProtKB-UniRule"/>
</dbReference>
<dbReference type="GO" id="GO:0001732">
    <property type="term" value="P:formation of cytoplasmic translation initiation complex"/>
    <property type="evidence" value="ECO:0007669"/>
    <property type="project" value="UniProtKB-UniRule"/>
</dbReference>
<dbReference type="GO" id="GO:0006446">
    <property type="term" value="P:regulation of translational initiation"/>
    <property type="evidence" value="ECO:0007669"/>
    <property type="project" value="InterPro"/>
</dbReference>
<dbReference type="FunFam" id="1.10.10.10:FF:000389">
    <property type="entry name" value="Eukaryotic translation initiation factor 3 subunit K"/>
    <property type="match status" value="1"/>
</dbReference>
<dbReference type="FunFam" id="1.25.40.250:FF:000003">
    <property type="entry name" value="Eukaryotic translation initiation factor 3 subunit K"/>
    <property type="match status" value="1"/>
</dbReference>
<dbReference type="Gene3D" id="1.25.40.250">
    <property type="entry name" value="ARM repeat, domain 1"/>
    <property type="match status" value="1"/>
</dbReference>
<dbReference type="Gene3D" id="1.10.10.10">
    <property type="entry name" value="Winged helix-like DNA-binding domain superfamily/Winged helix DNA-binding domain"/>
    <property type="match status" value="1"/>
</dbReference>
<dbReference type="HAMAP" id="MF_03010">
    <property type="entry name" value="eIF3k"/>
    <property type="match status" value="1"/>
</dbReference>
<dbReference type="InterPro" id="IPR016024">
    <property type="entry name" value="ARM-type_fold"/>
</dbReference>
<dbReference type="InterPro" id="IPR033464">
    <property type="entry name" value="CSN8_PSD8_EIF3K"/>
</dbReference>
<dbReference type="InterPro" id="IPR009374">
    <property type="entry name" value="eIF3k"/>
</dbReference>
<dbReference type="InterPro" id="IPR000717">
    <property type="entry name" value="PCI_dom"/>
</dbReference>
<dbReference type="InterPro" id="IPR016020">
    <property type="entry name" value="Transl_init_fac_sub12_N_euk"/>
</dbReference>
<dbReference type="InterPro" id="IPR036388">
    <property type="entry name" value="WH-like_DNA-bd_sf"/>
</dbReference>
<dbReference type="InterPro" id="IPR036390">
    <property type="entry name" value="WH_DNA-bd_sf"/>
</dbReference>
<dbReference type="PANTHER" id="PTHR13022">
    <property type="entry name" value="EUKARYOTIC TRANSLATION INITIATION FACTOR 3 SUBUNIT 11"/>
    <property type="match status" value="1"/>
</dbReference>
<dbReference type="PANTHER" id="PTHR13022:SF0">
    <property type="entry name" value="EUKARYOTIC TRANSLATION INITIATION FACTOR 3 SUBUNIT K"/>
    <property type="match status" value="1"/>
</dbReference>
<dbReference type="Pfam" id="PF10075">
    <property type="entry name" value="CSN8_PSD8_EIF3K"/>
    <property type="match status" value="1"/>
</dbReference>
<dbReference type="SUPFAM" id="SSF48371">
    <property type="entry name" value="ARM repeat"/>
    <property type="match status" value="1"/>
</dbReference>
<dbReference type="SUPFAM" id="SSF46785">
    <property type="entry name" value="Winged helix' DNA-binding domain"/>
    <property type="match status" value="1"/>
</dbReference>
<dbReference type="PROSITE" id="PS50250">
    <property type="entry name" value="PCI"/>
    <property type="match status" value="1"/>
</dbReference>
<organism>
    <name type="scientific">Botryotinia fuckeliana (strain B05.10)</name>
    <name type="common">Noble rot fungus</name>
    <name type="synonym">Botrytis cinerea</name>
    <dbReference type="NCBI Taxonomy" id="332648"/>
    <lineage>
        <taxon>Eukaryota</taxon>
        <taxon>Fungi</taxon>
        <taxon>Dikarya</taxon>
        <taxon>Ascomycota</taxon>
        <taxon>Pezizomycotina</taxon>
        <taxon>Leotiomycetes</taxon>
        <taxon>Helotiales</taxon>
        <taxon>Sclerotiniaceae</taxon>
        <taxon>Botrytis</taxon>
    </lineage>
</organism>
<name>EIF3K_BOTFB</name>
<sequence length="245" mass="27360">MGVPFDYAPDRPEHIDAILNGLDRYNPETTNIFQEYVTLQCEEKTYDCYANLALLKLYQFNPHLTKDETITNILVKSLTVFPSPDFSLALHLLPPHILTPISASSSLPAAGDAPLSEAVQKLAVLNTLLSSANYSQFWSTLDSDDLYADLIADVSGFEELVRIRIASTISQSVREVASSELENWLGMNGEAFEKFIKEVCGWTIENGVVIVPLNKENEAKGTVVRENVKMEQFSRVIKRAYEQPA</sequence>
<gene>
    <name type="ORF">BC1G_11363</name>
    <name type="ORF">BCIN_02g06500</name>
</gene>
<comment type="function">
    <text evidence="1">Component of the eukaryotic translation initiation factor 3 (eIF-3) complex, which is involved in protein synthesis of a specialized repertoire of mRNAs and, together with other initiation factors, stimulates binding of mRNA and methionyl-tRNAi to the 40S ribosome. The eIF-3 complex specifically targets and initiates translation of a subset of mRNAs involved in cell proliferation.</text>
</comment>
<comment type="subunit">
    <text evidence="1">Component of the eukaryotic translation initiation factor 3 (eIF-3) complex.</text>
</comment>
<comment type="subcellular location">
    <subcellularLocation>
        <location evidence="1">Cytoplasm</location>
    </subcellularLocation>
</comment>
<comment type="similarity">
    <text evidence="1">Belongs to the eIF-3 subunit K family.</text>
</comment>
<proteinExistence type="inferred from homology"/>
<reference key="1">
    <citation type="journal article" date="2011" name="PLoS Genet.">
        <title>Genomic analysis of the necrotrophic fungal pathogens Sclerotinia sclerotiorum and Botrytis cinerea.</title>
        <authorList>
            <person name="Amselem J."/>
            <person name="Cuomo C.A."/>
            <person name="van Kan J.A.L."/>
            <person name="Viaud M."/>
            <person name="Benito E.P."/>
            <person name="Couloux A."/>
            <person name="Coutinho P.M."/>
            <person name="de Vries R.P."/>
            <person name="Dyer P.S."/>
            <person name="Fillinger S."/>
            <person name="Fournier E."/>
            <person name="Gout L."/>
            <person name="Hahn M."/>
            <person name="Kohn L."/>
            <person name="Lapalu N."/>
            <person name="Plummer K.M."/>
            <person name="Pradier J.-M."/>
            <person name="Quevillon E."/>
            <person name="Sharon A."/>
            <person name="Simon A."/>
            <person name="ten Have A."/>
            <person name="Tudzynski B."/>
            <person name="Tudzynski P."/>
            <person name="Wincker P."/>
            <person name="Andrew M."/>
            <person name="Anthouard V."/>
            <person name="Beever R.E."/>
            <person name="Beffa R."/>
            <person name="Benoit I."/>
            <person name="Bouzid O."/>
            <person name="Brault B."/>
            <person name="Chen Z."/>
            <person name="Choquer M."/>
            <person name="Collemare J."/>
            <person name="Cotton P."/>
            <person name="Danchin E.G."/>
            <person name="Da Silva C."/>
            <person name="Gautier A."/>
            <person name="Giraud C."/>
            <person name="Giraud T."/>
            <person name="Gonzalez C."/>
            <person name="Grossetete S."/>
            <person name="Gueldener U."/>
            <person name="Henrissat B."/>
            <person name="Howlett B.J."/>
            <person name="Kodira C."/>
            <person name="Kretschmer M."/>
            <person name="Lappartient A."/>
            <person name="Leroch M."/>
            <person name="Levis C."/>
            <person name="Mauceli E."/>
            <person name="Neuveglise C."/>
            <person name="Oeser B."/>
            <person name="Pearson M."/>
            <person name="Poulain J."/>
            <person name="Poussereau N."/>
            <person name="Quesneville H."/>
            <person name="Rascle C."/>
            <person name="Schumacher J."/>
            <person name="Segurens B."/>
            <person name="Sexton A."/>
            <person name="Silva E."/>
            <person name="Sirven C."/>
            <person name="Soanes D.M."/>
            <person name="Talbot N.J."/>
            <person name="Templeton M."/>
            <person name="Yandava C."/>
            <person name="Yarden O."/>
            <person name="Zeng Q."/>
            <person name="Rollins J.A."/>
            <person name="Lebrun M.-H."/>
            <person name="Dickman M."/>
        </authorList>
    </citation>
    <scope>NUCLEOTIDE SEQUENCE [LARGE SCALE GENOMIC DNA]</scope>
    <source>
        <strain>B05.10</strain>
    </source>
</reference>
<reference key="2">
    <citation type="journal article" date="2012" name="Eukaryot. Cell">
        <title>Genome update of Botrytis cinerea strains B05.10 and T4.</title>
        <authorList>
            <person name="Staats M."/>
            <person name="van Kan J.A.L."/>
        </authorList>
    </citation>
    <scope>NUCLEOTIDE SEQUENCE [LARGE SCALE GENOMIC DNA]</scope>
    <scope>GENOME REANNOTATION</scope>
    <source>
        <strain>B05.10</strain>
    </source>
</reference>
<reference key="3">
    <citation type="journal article" date="2017" name="Mol. Plant Pathol.">
        <title>A gapless genome sequence of the fungus Botrytis cinerea.</title>
        <authorList>
            <person name="van Kan J.A.L."/>
            <person name="Stassen J.H.M."/>
            <person name="Mosbach A."/>
            <person name="van der Lee T.A.J."/>
            <person name="Faino L."/>
            <person name="Farmer A.D."/>
            <person name="Papasotiriou D.G."/>
            <person name="Zhou S."/>
            <person name="Seidl M.F."/>
            <person name="Cottam E."/>
            <person name="Edel D."/>
            <person name="Hahn M."/>
            <person name="Schwartz D.C."/>
            <person name="Dietrich R.A."/>
            <person name="Widdison S."/>
            <person name="Scalliet G."/>
        </authorList>
    </citation>
    <scope>NUCLEOTIDE SEQUENCE [LARGE SCALE GENOMIC DNA]</scope>
    <scope>GENOME REANNOTATION</scope>
    <source>
        <strain>B05.10</strain>
    </source>
</reference>
<evidence type="ECO:0000255" key="1">
    <source>
        <dbReference type="HAMAP-Rule" id="MF_03010"/>
    </source>
</evidence>
<evidence type="ECO:0000255" key="2">
    <source>
        <dbReference type="PROSITE-ProRule" id="PRU01185"/>
    </source>
</evidence>
<accession>A6SDU6</accession>
<accession>A0A384JA79</accession>
<keyword id="KW-0963">Cytoplasm</keyword>
<keyword id="KW-0396">Initiation factor</keyword>
<keyword id="KW-0648">Protein biosynthesis</keyword>
<keyword id="KW-1185">Reference proteome</keyword>